<sequence>MENLCDKCSSVIYSKEYHQCLANSTTRNFIVCNSTTINYDSLTMKQLCELANGGNKQVQKIILDRIQFFSYGSVPHRYIEFKKWEYFMDKIPHNQNYVRLYLCWIYYNCMEIDGSIIAHIKNLAKMCNIDAQTNYGLVNEYGIGVKKNIKKAIKWYKLSCYKENLFGLLFLGSLYERGYGVSCDKHMAFNLYEKATKHNYPAVKRQLAFMYRTGSGTTKNINKSHELYREAANQGYPLAQYALALQCKYGHGCIKNYKEAETWLIRSYNNGCLYATYSLARLYIETKSPLRNYSRAFELMQEAASENYLLAINYLAKIYKNGIGVNKNISRAIYWYYKAGNSTKITELLEINNSVIINTLDCNIFTCLDSIENEILFDIQLYILKYKYGDKCDYNLQLYQQLETIVFECIKLRNALDKSSALTTCLKPITKEYRDELSKFTIDTDVFVKHYYFNKQTYMTFGKANVKLSDDIIFFLSKKPYINIVNKLICLNKTNIDTVKDIKSINSKLQKYANLFVRYIEETVNIRNTMFQIKFSFIFR</sequence>
<name>YR815_MIMIV</name>
<feature type="chain" id="PRO_0000071364" description="Putative sel1-like repeat-containing protein R815">
    <location>
        <begin position="1"/>
        <end position="540"/>
    </location>
</feature>
<feature type="repeat" description="Sel1-like 1">
    <location>
        <begin position="129"/>
        <end position="164"/>
    </location>
</feature>
<feature type="repeat" description="Sel1-like 2">
    <location>
        <begin position="165"/>
        <end position="200"/>
    </location>
</feature>
<feature type="repeat" description="Sel1-like 3">
    <location>
        <begin position="201"/>
        <end position="236"/>
    </location>
</feature>
<feature type="repeat" description="Sel1-like 4">
    <location>
        <begin position="237"/>
        <end position="272"/>
    </location>
</feature>
<feature type="repeat" description="Sel1-like 5">
    <location>
        <begin position="273"/>
        <end position="308"/>
    </location>
</feature>
<feature type="repeat" description="Sel1-like 6">
    <location>
        <begin position="309"/>
        <end position="344"/>
    </location>
</feature>
<organismHost>
    <name type="scientific">Acanthamoeba polyphaga</name>
    <name type="common">Amoeba</name>
    <dbReference type="NCBI Taxonomy" id="5757"/>
</organismHost>
<accession>Q5UQH0</accession>
<reference key="1">
    <citation type="journal article" date="2004" name="Science">
        <title>The 1.2-megabase genome sequence of Mimivirus.</title>
        <authorList>
            <person name="Raoult D."/>
            <person name="Audic S."/>
            <person name="Robert C."/>
            <person name="Abergel C."/>
            <person name="Renesto P."/>
            <person name="Ogata H."/>
            <person name="La Scola B."/>
            <person name="Susan M."/>
            <person name="Claverie J.-M."/>
        </authorList>
    </citation>
    <scope>NUCLEOTIDE SEQUENCE [LARGE SCALE GENOMIC DNA]</scope>
    <source>
        <strain>Rowbotham-Bradford</strain>
    </source>
</reference>
<gene>
    <name type="ordered locus">MIMI_R815</name>
</gene>
<organism>
    <name type="scientific">Acanthamoeba polyphaga mimivirus</name>
    <name type="common">APMV</name>
    <dbReference type="NCBI Taxonomy" id="212035"/>
    <lineage>
        <taxon>Viruses</taxon>
        <taxon>Varidnaviria</taxon>
        <taxon>Bamfordvirae</taxon>
        <taxon>Nucleocytoviricota</taxon>
        <taxon>Megaviricetes</taxon>
        <taxon>Imitervirales</taxon>
        <taxon>Mimiviridae</taxon>
        <taxon>Megamimivirinae</taxon>
        <taxon>Mimivirus</taxon>
        <taxon>Mimivirus bradfordmassiliense</taxon>
    </lineage>
</organism>
<keyword id="KW-1185">Reference proteome</keyword>
<keyword id="KW-0677">Repeat</keyword>
<dbReference type="EMBL" id="AY653733">
    <property type="protein sequence ID" value="AAV51075.1"/>
    <property type="molecule type" value="Genomic_DNA"/>
</dbReference>
<dbReference type="SMR" id="Q5UQH0"/>
<dbReference type="KEGG" id="vg:9925478"/>
<dbReference type="Proteomes" id="UP000001134">
    <property type="component" value="Genome"/>
</dbReference>
<dbReference type="Gene3D" id="1.25.40.10">
    <property type="entry name" value="Tetratricopeptide repeat domain"/>
    <property type="match status" value="1"/>
</dbReference>
<dbReference type="InterPro" id="IPR006597">
    <property type="entry name" value="Sel1-like"/>
</dbReference>
<dbReference type="InterPro" id="IPR050767">
    <property type="entry name" value="Sel1_AlgK"/>
</dbReference>
<dbReference type="InterPro" id="IPR011990">
    <property type="entry name" value="TPR-like_helical_dom_sf"/>
</dbReference>
<dbReference type="PANTHER" id="PTHR11102:SF160">
    <property type="entry name" value="ERAD-ASSOCIATED E3 UBIQUITIN-PROTEIN LIGASE COMPONENT HRD3"/>
    <property type="match status" value="1"/>
</dbReference>
<dbReference type="PANTHER" id="PTHR11102">
    <property type="entry name" value="SEL-1-LIKE PROTEIN"/>
    <property type="match status" value="1"/>
</dbReference>
<dbReference type="Pfam" id="PF08238">
    <property type="entry name" value="Sel1"/>
    <property type="match status" value="6"/>
</dbReference>
<dbReference type="SMART" id="SM00671">
    <property type="entry name" value="SEL1"/>
    <property type="match status" value="6"/>
</dbReference>
<dbReference type="SUPFAM" id="SSF81901">
    <property type="entry name" value="HCP-like"/>
    <property type="match status" value="1"/>
</dbReference>
<protein>
    <recommendedName>
        <fullName>Putative sel1-like repeat-containing protein R815</fullName>
    </recommendedName>
</protein>
<proteinExistence type="predicted"/>